<dbReference type="EMBL" id="AL646052">
    <property type="protein sequence ID" value="CAD15035.1"/>
    <property type="molecule type" value="Genomic_DNA"/>
</dbReference>
<dbReference type="RefSeq" id="WP_011001282.1">
    <property type="nucleotide sequence ID" value="NC_003295.1"/>
</dbReference>
<dbReference type="SMR" id="Q8XZR2"/>
<dbReference type="STRING" id="267608.RSc1333"/>
<dbReference type="EnsemblBacteria" id="CAD15035">
    <property type="protein sequence ID" value="CAD15035"/>
    <property type="gene ID" value="RSc1333"/>
</dbReference>
<dbReference type="KEGG" id="rso:RSc1333"/>
<dbReference type="eggNOG" id="COG0239">
    <property type="taxonomic scope" value="Bacteria"/>
</dbReference>
<dbReference type="HOGENOM" id="CLU_114342_3_3_4"/>
<dbReference type="Proteomes" id="UP000001436">
    <property type="component" value="Chromosome"/>
</dbReference>
<dbReference type="GO" id="GO:0005886">
    <property type="term" value="C:plasma membrane"/>
    <property type="evidence" value="ECO:0007669"/>
    <property type="project" value="UniProtKB-SubCell"/>
</dbReference>
<dbReference type="GO" id="GO:0062054">
    <property type="term" value="F:fluoride channel activity"/>
    <property type="evidence" value="ECO:0007669"/>
    <property type="project" value="UniProtKB-UniRule"/>
</dbReference>
<dbReference type="GO" id="GO:0046872">
    <property type="term" value="F:metal ion binding"/>
    <property type="evidence" value="ECO:0007669"/>
    <property type="project" value="UniProtKB-KW"/>
</dbReference>
<dbReference type="GO" id="GO:0140114">
    <property type="term" value="P:cellular detoxification of fluoride"/>
    <property type="evidence" value="ECO:0007669"/>
    <property type="project" value="UniProtKB-UniRule"/>
</dbReference>
<dbReference type="HAMAP" id="MF_00454">
    <property type="entry name" value="FluC"/>
    <property type="match status" value="1"/>
</dbReference>
<dbReference type="InterPro" id="IPR003691">
    <property type="entry name" value="FluC"/>
</dbReference>
<dbReference type="NCBIfam" id="TIGR00494">
    <property type="entry name" value="crcB"/>
    <property type="match status" value="1"/>
</dbReference>
<dbReference type="NCBIfam" id="NF010792">
    <property type="entry name" value="PRK14196.1"/>
    <property type="match status" value="1"/>
</dbReference>
<dbReference type="PANTHER" id="PTHR28259">
    <property type="entry name" value="FLUORIDE EXPORT PROTEIN 1-RELATED"/>
    <property type="match status" value="1"/>
</dbReference>
<dbReference type="PANTHER" id="PTHR28259:SF1">
    <property type="entry name" value="FLUORIDE EXPORT PROTEIN 1-RELATED"/>
    <property type="match status" value="1"/>
</dbReference>
<dbReference type="Pfam" id="PF02537">
    <property type="entry name" value="CRCB"/>
    <property type="match status" value="1"/>
</dbReference>
<gene>
    <name evidence="1" type="primary">fluC</name>
    <name evidence="1" type="synonym">crcB</name>
    <name type="ordered locus">RSc1333</name>
    <name type="ORF">RS02855</name>
</gene>
<protein>
    <recommendedName>
        <fullName evidence="1">Fluoride-specific ion channel FluC</fullName>
    </recommendedName>
</protein>
<comment type="function">
    <text evidence="1">Fluoride-specific ion channel. Important for reducing fluoride concentration in the cell, thus reducing its toxicity.</text>
</comment>
<comment type="catalytic activity">
    <reaction evidence="1">
        <text>fluoride(in) = fluoride(out)</text>
        <dbReference type="Rhea" id="RHEA:76159"/>
        <dbReference type="ChEBI" id="CHEBI:17051"/>
    </reaction>
    <physiologicalReaction direction="left-to-right" evidence="1">
        <dbReference type="Rhea" id="RHEA:76160"/>
    </physiologicalReaction>
</comment>
<comment type="activity regulation">
    <text evidence="1">Na(+) is not transported, but it plays an essential structural role and its presence is essential for fluoride channel function.</text>
</comment>
<comment type="subcellular location">
    <subcellularLocation>
        <location evidence="1">Cell inner membrane</location>
        <topology evidence="1">Multi-pass membrane protein</topology>
    </subcellularLocation>
</comment>
<comment type="similarity">
    <text evidence="1">Belongs to the fluoride channel Fluc/FEX (TC 1.A.43) family.</text>
</comment>
<feature type="chain" id="PRO_0000110161" description="Fluoride-specific ion channel FluC">
    <location>
        <begin position="1"/>
        <end position="126"/>
    </location>
</feature>
<feature type="transmembrane region" description="Helical" evidence="1">
    <location>
        <begin position="6"/>
        <end position="26"/>
    </location>
</feature>
<feature type="transmembrane region" description="Helical" evidence="1">
    <location>
        <begin position="36"/>
        <end position="56"/>
    </location>
</feature>
<feature type="transmembrane region" description="Helical" evidence="1">
    <location>
        <begin position="68"/>
        <end position="88"/>
    </location>
</feature>
<feature type="transmembrane region" description="Helical" evidence="1">
    <location>
        <begin position="99"/>
        <end position="119"/>
    </location>
</feature>
<feature type="binding site" evidence="1">
    <location>
        <position position="76"/>
    </location>
    <ligand>
        <name>Na(+)</name>
        <dbReference type="ChEBI" id="CHEBI:29101"/>
        <note>structural</note>
    </ligand>
</feature>
<feature type="binding site" evidence="1">
    <location>
        <position position="79"/>
    </location>
    <ligand>
        <name>Na(+)</name>
        <dbReference type="ChEBI" id="CHEBI:29101"/>
        <note>structural</note>
    </ligand>
</feature>
<name>FLUC_RALN1</name>
<organism>
    <name type="scientific">Ralstonia nicotianae (strain ATCC BAA-1114 / GMI1000)</name>
    <name type="common">Ralstonia solanacearum</name>
    <dbReference type="NCBI Taxonomy" id="267608"/>
    <lineage>
        <taxon>Bacteria</taxon>
        <taxon>Pseudomonadati</taxon>
        <taxon>Pseudomonadota</taxon>
        <taxon>Betaproteobacteria</taxon>
        <taxon>Burkholderiales</taxon>
        <taxon>Burkholderiaceae</taxon>
        <taxon>Ralstonia</taxon>
        <taxon>Ralstonia solanacearum species complex</taxon>
    </lineage>
</organism>
<accession>Q8XZR2</accession>
<sequence length="126" mass="13101">MSGMGFVAVGVGAALGAWLRWAFAVLWNAINPALPYGTLAANLLGGYLIGVAVGFFDTHASLPPEWRLLAVTGFLGGLTTFSTFSSEVMANILAGDYAIGMLHVAAHLGGSLFLTMLGLWTVRTLG</sequence>
<reference key="1">
    <citation type="journal article" date="2002" name="Nature">
        <title>Genome sequence of the plant pathogen Ralstonia solanacearum.</title>
        <authorList>
            <person name="Salanoubat M."/>
            <person name="Genin S."/>
            <person name="Artiguenave F."/>
            <person name="Gouzy J."/>
            <person name="Mangenot S."/>
            <person name="Arlat M."/>
            <person name="Billault A."/>
            <person name="Brottier P."/>
            <person name="Camus J.-C."/>
            <person name="Cattolico L."/>
            <person name="Chandler M."/>
            <person name="Choisne N."/>
            <person name="Claudel-Renard C."/>
            <person name="Cunnac S."/>
            <person name="Demange N."/>
            <person name="Gaspin C."/>
            <person name="Lavie M."/>
            <person name="Moisan A."/>
            <person name="Robert C."/>
            <person name="Saurin W."/>
            <person name="Schiex T."/>
            <person name="Siguier P."/>
            <person name="Thebault P."/>
            <person name="Whalen M."/>
            <person name="Wincker P."/>
            <person name="Levy M."/>
            <person name="Weissenbach J."/>
            <person name="Boucher C.A."/>
        </authorList>
    </citation>
    <scope>NUCLEOTIDE SEQUENCE [LARGE SCALE GENOMIC DNA]</scope>
    <source>
        <strain>ATCC BAA-1114 / GMI1000</strain>
    </source>
</reference>
<keyword id="KW-0997">Cell inner membrane</keyword>
<keyword id="KW-1003">Cell membrane</keyword>
<keyword id="KW-0407">Ion channel</keyword>
<keyword id="KW-0406">Ion transport</keyword>
<keyword id="KW-0472">Membrane</keyword>
<keyword id="KW-0479">Metal-binding</keyword>
<keyword id="KW-1185">Reference proteome</keyword>
<keyword id="KW-0915">Sodium</keyword>
<keyword id="KW-0812">Transmembrane</keyword>
<keyword id="KW-1133">Transmembrane helix</keyword>
<keyword id="KW-0813">Transport</keyword>
<proteinExistence type="inferred from homology"/>
<evidence type="ECO:0000255" key="1">
    <source>
        <dbReference type="HAMAP-Rule" id="MF_00454"/>
    </source>
</evidence>